<sequence>MGSELIGRLAPRLGLAEPDMLRKAEEYLRLSRVKCVGLSARTTETSSAVMCLDLAASWMKCPLDRAYLIKLSGLNKETYQSCLKSFECLLGLNSNIGIRDLAVQFSCIEAVNMASKILKSYESSLPQTQQVDLDLSRPLFTSAALLSACKILKLKVDKNKMVATSGVKKAIFDRLCKQLEKIGQQVDREPGDVATPPRKRKKIVVEAPAKEMEKVEEMPHKPQKDEDLTQDYEEWKRKILENAASAQKATAE</sequence>
<evidence type="ECO:0000250" key="1"/>
<evidence type="ECO:0000256" key="2">
    <source>
        <dbReference type="SAM" id="MobiDB-lite"/>
    </source>
</evidence>
<evidence type="ECO:0000269" key="3">
    <source>
    </source>
</evidence>
<evidence type="ECO:0000269" key="4">
    <source>
    </source>
</evidence>
<evidence type="ECO:0000269" key="5">
    <source>
    </source>
</evidence>
<evidence type="ECO:0000305" key="6"/>
<evidence type="ECO:0007744" key="7">
    <source>
    </source>
</evidence>
<evidence type="ECO:0007744" key="8">
    <source>
    </source>
</evidence>
<evidence type="ECO:0007744" key="9">
    <source>
    </source>
</evidence>
<evidence type="ECO:0007744" key="10">
    <source>
    </source>
</evidence>
<evidence type="ECO:0007744" key="11">
    <source>
    </source>
</evidence>
<evidence type="ECO:0007829" key="12">
    <source>
        <dbReference type="PDB" id="3M03"/>
    </source>
</evidence>
<evidence type="ECO:0007829" key="13">
    <source>
        <dbReference type="PDB" id="6KVG"/>
    </source>
</evidence>
<keyword id="KW-0002">3D-structure</keyword>
<keyword id="KW-0225">Disease variant</keyword>
<keyword id="KW-0235">DNA replication</keyword>
<keyword id="KW-0238">DNA-binding</keyword>
<keyword id="KW-0242">Dwarfism</keyword>
<keyword id="KW-1017">Isopeptide bond</keyword>
<keyword id="KW-0539">Nucleus</keyword>
<keyword id="KW-0597">Phosphoprotein</keyword>
<keyword id="KW-1267">Proteomics identification</keyword>
<keyword id="KW-1185">Reference proteome</keyword>
<keyword id="KW-0832">Ubl conjugation</keyword>
<gene>
    <name type="primary">ORC6</name>
    <name type="synonym">ORC6L</name>
</gene>
<accession>Q9Y5N6</accession>
<accession>B3KN89</accession>
<proteinExistence type="evidence at protein level"/>
<organism>
    <name type="scientific">Homo sapiens</name>
    <name type="common">Human</name>
    <dbReference type="NCBI Taxonomy" id="9606"/>
    <lineage>
        <taxon>Eukaryota</taxon>
        <taxon>Metazoa</taxon>
        <taxon>Chordata</taxon>
        <taxon>Craniata</taxon>
        <taxon>Vertebrata</taxon>
        <taxon>Euteleostomi</taxon>
        <taxon>Mammalia</taxon>
        <taxon>Eutheria</taxon>
        <taxon>Euarchontoglires</taxon>
        <taxon>Primates</taxon>
        <taxon>Haplorrhini</taxon>
        <taxon>Catarrhini</taxon>
        <taxon>Hominidae</taxon>
        <taxon>Homo</taxon>
    </lineage>
</organism>
<comment type="function">
    <text evidence="5">Component of the origin recognition complex (ORC) that binds origins of replication. DNA-binding is ATP-dependent. The specific DNA sequences that define origins of replication have not been identified yet. ORC is required to assemble the pre-replication complex necessary to initiate DNA replication. Does not bind histone H3 and H4 trimethylation marks H3K9me3, H3K27me3 and H4K20me3.</text>
</comment>
<comment type="subunit">
    <text evidence="1">Component of ORC, a complex composed of at least 6 subunits: ORC1, ORC2, ORC3, ORC4, ORC5 and ORC6. ORC is regulated in a cell-cycle dependent manner. It is sequentially assembled at the exit from anaphase of mitosis and disassembled as cells enter S phase. Interacts with DBF4 (By similarity).</text>
</comment>
<comment type="interaction">
    <interactant intactId="EBI-374840">
        <id>Q9Y5N6</id>
    </interactant>
    <interactant intactId="EBI-746843">
        <id>P17096</id>
        <label>HMGA1</label>
    </interactant>
    <organismsDiffer>false</organismsDiffer>
    <experiments>4</experiments>
</comment>
<comment type="interaction">
    <interactant intactId="EBI-374840">
        <id>Q9Y5N6</id>
    </interactant>
    <interactant intactId="EBI-2865388">
        <id>Q969G2</id>
        <label>LHX4</label>
    </interactant>
    <organismsDiffer>false</organismsDiffer>
    <experiments>8</experiments>
</comment>
<comment type="interaction">
    <interactant intactId="EBI-374840">
        <id>Q9Y5N6</id>
    </interactant>
    <interactant intactId="EBI-374916">
        <id>Q9UBD5</id>
        <label>ORC3</label>
    </interactant>
    <organismsDiffer>false</organismsDiffer>
    <experiments>4</experiments>
</comment>
<comment type="interaction">
    <interactant intactId="EBI-374840">
        <id>Q9Y5N6</id>
    </interactant>
    <interactant intactId="EBI-374889">
        <id>O43929</id>
        <label>ORC4</label>
    </interactant>
    <organismsDiffer>false</organismsDiffer>
    <experiments>2</experiments>
</comment>
<comment type="interaction">
    <interactant intactId="EBI-374840">
        <id>Q9Y5N6</id>
    </interactant>
    <interactant intactId="EBI-413317">
        <id>Q96R06</id>
        <label>SPAG5</label>
    </interactant>
    <organismsDiffer>false</organismsDiffer>
    <experiments>4</experiments>
</comment>
<comment type="subcellular location">
    <subcellularLocation>
        <location>Nucleus</location>
    </subcellularLocation>
</comment>
<comment type="disease" evidence="3">
    <disease id="DI-03045">
        <name>Meier-Gorlin syndrome 3</name>
        <acronym>MGORS3</acronym>
        <description>A syndrome characterized by bilateral microtia, aplasia/hypoplasia of the patellae, and severe intrauterine and postnatal growth retardation with short stature and poor weight gain. Additional clinical findings include anomalies of cranial sutures, microcephaly, apparently low-set and simple ears, microstomia, full lips, highly arched or cleft palate, micrognathia, genitourinary tract anomalies, and various skeletal anomalies. While almost all cases have primordial dwarfism with substantial prenatal and postnatal growth retardation, not all cases have microcephaly, and microtia and absent/hypoplastic patella are absent in some. Despite the presence of microcephaly, intellect is usually normal.</description>
        <dbReference type="MIM" id="613803"/>
    </disease>
    <text>The disease is caused by variants affecting the gene represented in this entry.</text>
</comment>
<comment type="similarity">
    <text evidence="6">Belongs to the ORC6 family.</text>
</comment>
<dbReference type="EMBL" id="AF139658">
    <property type="protein sequence ID" value="AAD32666.1"/>
    <property type="molecule type" value="mRNA"/>
</dbReference>
<dbReference type="EMBL" id="AK024019">
    <property type="protein sequence ID" value="BAG51251.1"/>
    <property type="molecule type" value="mRNA"/>
</dbReference>
<dbReference type="EMBL" id="CH471092">
    <property type="protein sequence ID" value="EAW82685.1"/>
    <property type="molecule type" value="Genomic_DNA"/>
</dbReference>
<dbReference type="EMBL" id="BC039032">
    <property type="protein sequence ID" value="AAH39032.1"/>
    <property type="molecule type" value="mRNA"/>
</dbReference>
<dbReference type="EMBL" id="BC063565">
    <property type="protein sequence ID" value="AAH63565.1"/>
    <property type="molecule type" value="mRNA"/>
</dbReference>
<dbReference type="CCDS" id="CCDS10722.1"/>
<dbReference type="RefSeq" id="NP_055136.1">
    <property type="nucleotide sequence ID" value="NM_014321.4"/>
</dbReference>
<dbReference type="PDB" id="3M03">
    <property type="method" value="X-ray"/>
    <property type="resolution" value="2.50 A"/>
    <property type="chains" value="A/B/C=94-187"/>
</dbReference>
<dbReference type="PDB" id="6KVG">
    <property type="method" value="NMR"/>
    <property type="chains" value="A=1-252"/>
</dbReference>
<dbReference type="PDB" id="8S0B">
    <property type="method" value="EM"/>
    <property type="resolution" value="3.60 A"/>
    <property type="chains" value="F=2-252"/>
</dbReference>
<dbReference type="PDB" id="8S0D">
    <property type="method" value="EM"/>
    <property type="resolution" value="3.60 A"/>
    <property type="chains" value="F=2-252"/>
</dbReference>
<dbReference type="PDBsum" id="3M03"/>
<dbReference type="PDBsum" id="6KVG"/>
<dbReference type="PDBsum" id="8S0B"/>
<dbReference type="PDBsum" id="8S0D"/>
<dbReference type="EMDB" id="EMD-19620"/>
<dbReference type="EMDB" id="EMD-19622"/>
<dbReference type="SMR" id="Q9Y5N6"/>
<dbReference type="BioGRID" id="117129">
    <property type="interactions" value="49"/>
</dbReference>
<dbReference type="ComplexPortal" id="CPX-1880">
    <property type="entry name" value="Nuclear origin recognition complex"/>
</dbReference>
<dbReference type="CORUM" id="Q9Y5N6"/>
<dbReference type="DIP" id="DIP-29692N"/>
<dbReference type="FunCoup" id="Q9Y5N6">
    <property type="interactions" value="1583"/>
</dbReference>
<dbReference type="IntAct" id="Q9Y5N6">
    <property type="interactions" value="25"/>
</dbReference>
<dbReference type="MINT" id="Q9Y5N6"/>
<dbReference type="STRING" id="9606.ENSP00000219097"/>
<dbReference type="iPTMnet" id="Q9Y5N6"/>
<dbReference type="PhosphoSitePlus" id="Q9Y5N6"/>
<dbReference type="SwissPalm" id="Q9Y5N6"/>
<dbReference type="BioMuta" id="ORC6"/>
<dbReference type="DMDM" id="8928274"/>
<dbReference type="jPOST" id="Q9Y5N6"/>
<dbReference type="MassIVE" id="Q9Y5N6"/>
<dbReference type="PaxDb" id="9606-ENSP00000219097"/>
<dbReference type="PeptideAtlas" id="Q9Y5N6"/>
<dbReference type="ProteomicsDB" id="86456"/>
<dbReference type="Pumba" id="Q9Y5N6"/>
<dbReference type="Antibodypedia" id="4278">
    <property type="antibodies" value="239 antibodies from 34 providers"/>
</dbReference>
<dbReference type="DNASU" id="23594"/>
<dbReference type="Ensembl" id="ENST00000219097.7">
    <property type="protein sequence ID" value="ENSP00000219097.2"/>
    <property type="gene ID" value="ENSG00000091651.9"/>
</dbReference>
<dbReference type="GeneID" id="23594"/>
<dbReference type="KEGG" id="hsa:23594"/>
<dbReference type="MANE-Select" id="ENST00000219097.7">
    <property type="protein sequence ID" value="ENSP00000219097.2"/>
    <property type="RefSeq nucleotide sequence ID" value="NM_014321.4"/>
    <property type="RefSeq protein sequence ID" value="NP_055136.1"/>
</dbReference>
<dbReference type="UCSC" id="uc002eeh.3">
    <property type="organism name" value="human"/>
</dbReference>
<dbReference type="AGR" id="HGNC:17151"/>
<dbReference type="CTD" id="23594"/>
<dbReference type="DisGeNET" id="23594"/>
<dbReference type="GeneCards" id="ORC6"/>
<dbReference type="HGNC" id="HGNC:17151">
    <property type="gene designation" value="ORC6"/>
</dbReference>
<dbReference type="HPA" id="ENSG00000091651">
    <property type="expression patterns" value="Tissue enhanced (bone marrow, lymphoid tissue, testis)"/>
</dbReference>
<dbReference type="MalaCards" id="ORC6"/>
<dbReference type="MIM" id="607213">
    <property type="type" value="gene"/>
</dbReference>
<dbReference type="MIM" id="613803">
    <property type="type" value="phenotype"/>
</dbReference>
<dbReference type="neXtProt" id="NX_Q9Y5N6"/>
<dbReference type="OpenTargets" id="ENSG00000091651"/>
<dbReference type="Orphanet" id="2554">
    <property type="disease" value="Ear-patella-short stature syndrome"/>
</dbReference>
<dbReference type="PharmGKB" id="PA32813"/>
<dbReference type="VEuPathDB" id="HostDB:ENSG00000091651"/>
<dbReference type="eggNOG" id="KOG4557">
    <property type="taxonomic scope" value="Eukaryota"/>
</dbReference>
<dbReference type="GeneTree" id="ENSGT00390000007370"/>
<dbReference type="InParanoid" id="Q9Y5N6"/>
<dbReference type="OMA" id="RKSHYLN"/>
<dbReference type="OrthoDB" id="5552484at2759"/>
<dbReference type="PAN-GO" id="Q9Y5N6">
    <property type="GO annotations" value="2 GO annotations based on evolutionary models"/>
</dbReference>
<dbReference type="PhylomeDB" id="Q9Y5N6"/>
<dbReference type="TreeFam" id="TF101096"/>
<dbReference type="BRENDA" id="3.6.4.B8">
    <property type="organism ID" value="2681"/>
</dbReference>
<dbReference type="PathwayCommons" id="Q9Y5N6"/>
<dbReference type="Reactome" id="R-HSA-113507">
    <property type="pathway name" value="E2F-enabled inhibition of pre-replication complex formation"/>
</dbReference>
<dbReference type="Reactome" id="R-HSA-176187">
    <property type="pathway name" value="Activation of ATR in response to replication stress"/>
</dbReference>
<dbReference type="Reactome" id="R-HSA-68616">
    <property type="pathway name" value="Assembly of the ORC complex at the origin of replication"/>
</dbReference>
<dbReference type="Reactome" id="R-HSA-68689">
    <property type="pathway name" value="CDC6 association with the ORC:origin complex"/>
</dbReference>
<dbReference type="Reactome" id="R-HSA-68867">
    <property type="pathway name" value="Assembly of the pre-replicative complex"/>
</dbReference>
<dbReference type="Reactome" id="R-HSA-68949">
    <property type="pathway name" value="Orc1 removal from chromatin"/>
</dbReference>
<dbReference type="Reactome" id="R-HSA-68962">
    <property type="pathway name" value="Activation of the pre-replicative complex"/>
</dbReference>
<dbReference type="SignaLink" id="Q9Y5N6"/>
<dbReference type="SIGNOR" id="Q9Y5N6"/>
<dbReference type="BioGRID-ORCS" id="23594">
    <property type="hits" value="831 hits in 1167 CRISPR screens"/>
</dbReference>
<dbReference type="ChiTaRS" id="ORC6">
    <property type="organism name" value="human"/>
</dbReference>
<dbReference type="EvolutionaryTrace" id="Q9Y5N6"/>
<dbReference type="GeneWiki" id="ORC6"/>
<dbReference type="GeneWiki" id="ORC6L"/>
<dbReference type="GenomeRNAi" id="23594"/>
<dbReference type="Pharos" id="Q9Y5N6">
    <property type="development level" value="Tbio"/>
</dbReference>
<dbReference type="PRO" id="PR:Q9Y5N6"/>
<dbReference type="Proteomes" id="UP000005640">
    <property type="component" value="Chromosome 16"/>
</dbReference>
<dbReference type="RNAct" id="Q9Y5N6">
    <property type="molecule type" value="protein"/>
</dbReference>
<dbReference type="Bgee" id="ENSG00000091651">
    <property type="expression patterns" value="Expressed in oocyte and 181 other cell types or tissues"/>
</dbReference>
<dbReference type="ExpressionAtlas" id="Q9Y5N6">
    <property type="expression patterns" value="baseline and differential"/>
</dbReference>
<dbReference type="GO" id="GO:0005829">
    <property type="term" value="C:cytosol"/>
    <property type="evidence" value="ECO:0000304"/>
    <property type="project" value="Reactome"/>
</dbReference>
<dbReference type="GO" id="GO:0001650">
    <property type="term" value="C:fibrillar center"/>
    <property type="evidence" value="ECO:0000314"/>
    <property type="project" value="HPA"/>
</dbReference>
<dbReference type="GO" id="GO:0016020">
    <property type="term" value="C:membrane"/>
    <property type="evidence" value="ECO:0007005"/>
    <property type="project" value="UniProtKB"/>
</dbReference>
<dbReference type="GO" id="GO:0005664">
    <property type="term" value="C:nuclear origin of replication recognition complex"/>
    <property type="evidence" value="ECO:0000353"/>
    <property type="project" value="ComplexPortal"/>
</dbReference>
<dbReference type="GO" id="GO:0005654">
    <property type="term" value="C:nucleoplasm"/>
    <property type="evidence" value="ECO:0000314"/>
    <property type="project" value="HPA"/>
</dbReference>
<dbReference type="GO" id="GO:0005634">
    <property type="term" value="C:nucleus"/>
    <property type="evidence" value="ECO:0000303"/>
    <property type="project" value="ComplexPortal"/>
</dbReference>
<dbReference type="GO" id="GO:0000808">
    <property type="term" value="C:origin recognition complex"/>
    <property type="evidence" value="ECO:0000314"/>
    <property type="project" value="UniProtKB"/>
</dbReference>
<dbReference type="GO" id="GO:0003677">
    <property type="term" value="F:DNA binding"/>
    <property type="evidence" value="ECO:0007669"/>
    <property type="project" value="UniProtKB-KW"/>
</dbReference>
<dbReference type="GO" id="GO:0006270">
    <property type="term" value="P:DNA replication initiation"/>
    <property type="evidence" value="ECO:0000314"/>
    <property type="project" value="ComplexPortal"/>
</dbReference>
<dbReference type="CDD" id="cd16075">
    <property type="entry name" value="ORC6_CTD"/>
    <property type="match status" value="1"/>
</dbReference>
<dbReference type="CDD" id="cd11583">
    <property type="entry name" value="Orc6_mid"/>
    <property type="match status" value="1"/>
</dbReference>
<dbReference type="FunFam" id="1.10.472.10:FF:000054">
    <property type="entry name" value="origin recognition complex subunit 6"/>
    <property type="match status" value="1"/>
</dbReference>
<dbReference type="Gene3D" id="1.10.472.10">
    <property type="entry name" value="Cyclin-like"/>
    <property type="match status" value="1"/>
</dbReference>
<dbReference type="InterPro" id="IPR054113">
    <property type="entry name" value="ORC6_cyclin-like_2nd"/>
</dbReference>
<dbReference type="InterPro" id="IPR008721">
    <property type="entry name" value="ORC6_cyclin_first"/>
</dbReference>
<dbReference type="InterPro" id="IPR020529">
    <property type="entry name" value="ORC6_met/pln"/>
</dbReference>
<dbReference type="PANTHER" id="PTHR13394">
    <property type="entry name" value="ORIGIN RECOGNITION COMPLEX SUBUNIT 6"/>
    <property type="match status" value="1"/>
</dbReference>
<dbReference type="PANTHER" id="PTHR13394:SF0">
    <property type="entry name" value="ORIGIN RECOGNITION COMPLEX SUBUNIT 6"/>
    <property type="match status" value="1"/>
</dbReference>
<dbReference type="Pfam" id="PF05460">
    <property type="entry name" value="ORC6"/>
    <property type="match status" value="1"/>
</dbReference>
<dbReference type="Pfam" id="PF21913">
    <property type="entry name" value="ORC6_2nd"/>
    <property type="match status" value="1"/>
</dbReference>
<protein>
    <recommendedName>
        <fullName>Origin recognition complex subunit 6</fullName>
    </recommendedName>
</protein>
<name>ORC6_HUMAN</name>
<feature type="chain" id="PRO_0000127097" description="Origin recognition complex subunit 6">
    <location>
        <begin position="1"/>
        <end position="252"/>
    </location>
</feature>
<feature type="region of interest" description="Disordered" evidence="2">
    <location>
        <begin position="188"/>
        <end position="232"/>
    </location>
</feature>
<feature type="compositionally biased region" description="Basic and acidic residues" evidence="2">
    <location>
        <begin position="208"/>
        <end position="232"/>
    </location>
</feature>
<feature type="modified residue" description="Phosphothreonine" evidence="7 9 10">
    <location>
        <position position="195"/>
    </location>
</feature>
<feature type="modified residue" description="Phosphothreonine" evidence="8">
    <location>
        <position position="229"/>
    </location>
</feature>
<feature type="cross-link" description="Glycyl lysine isopeptide (Lys-Gly) (interchain with G-Cter in SUMO2)" evidence="11">
    <location>
        <position position="210"/>
    </location>
</feature>
<feature type="sequence variant" id="VAR_029283" description="In dbSNP:rs3218744.">
    <original>R</original>
    <variation>W</variation>
    <location>
        <position position="32"/>
    </location>
</feature>
<feature type="sequence variant" id="VAR_029284" description="In dbSNP:rs3218745.">
    <original>P</original>
    <variation>Q</variation>
    <location>
        <position position="138"/>
    </location>
</feature>
<feature type="sequence variant" id="VAR_065487" description="In MGORS3; dbSNP:rs387906969." evidence="3">
    <original>Y</original>
    <variation>S</variation>
    <location>
        <position position="232"/>
    </location>
</feature>
<feature type="mutagenesis site" description="Abolished DNA binding." evidence="4">
    <original>Q</original>
    <variation>A</variation>
    <location>
        <position position="129"/>
    </location>
</feature>
<feature type="mutagenesis site" description="Abolished DNA binding." evidence="4">
    <original>R</original>
    <variation>A</variation>
    <location>
        <position position="137"/>
    </location>
</feature>
<feature type="mutagenesis site" description="Abolished DNA binding." evidence="4">
    <original>K</original>
    <variation>A</variation>
    <location>
        <position position="168"/>
    </location>
</feature>
<feature type="strand" evidence="13">
    <location>
        <begin position="1"/>
        <end position="3"/>
    </location>
</feature>
<feature type="helix" evidence="13">
    <location>
        <begin position="4"/>
        <end position="9"/>
    </location>
</feature>
<feature type="helix" evidence="13">
    <location>
        <begin position="10"/>
        <end position="12"/>
    </location>
</feature>
<feature type="helix" evidence="13">
    <location>
        <begin position="18"/>
        <end position="34"/>
    </location>
</feature>
<feature type="strand" evidence="13">
    <location>
        <begin position="40"/>
        <end position="42"/>
    </location>
</feature>
<feature type="helix" evidence="13">
    <location>
        <begin position="44"/>
        <end position="58"/>
    </location>
</feature>
<feature type="helix" evidence="13">
    <location>
        <begin position="65"/>
        <end position="71"/>
    </location>
</feature>
<feature type="helix" evidence="13">
    <location>
        <begin position="76"/>
        <end position="90"/>
    </location>
</feature>
<feature type="helix" evidence="12">
    <location>
        <begin position="98"/>
        <end position="105"/>
    </location>
</feature>
<feature type="helix" evidence="12">
    <location>
        <begin position="108"/>
        <end position="110"/>
    </location>
</feature>
<feature type="helix" evidence="12">
    <location>
        <begin position="111"/>
        <end position="122"/>
    </location>
</feature>
<feature type="helix" evidence="12">
    <location>
        <begin position="127"/>
        <end position="132"/>
    </location>
</feature>
<feature type="helix" evidence="12">
    <location>
        <begin position="138"/>
        <end position="151"/>
    </location>
</feature>
<feature type="helix" evidence="12">
    <location>
        <begin position="158"/>
        <end position="163"/>
    </location>
</feature>
<feature type="helix" evidence="12">
    <location>
        <begin position="169"/>
        <end position="183"/>
    </location>
</feature>
<feature type="helix" evidence="13">
    <location>
        <begin position="196"/>
        <end position="198"/>
    </location>
</feature>
<feature type="strand" evidence="13">
    <location>
        <begin position="210"/>
        <end position="212"/>
    </location>
</feature>
<feature type="helix" evidence="13">
    <location>
        <begin position="232"/>
        <end position="242"/>
    </location>
</feature>
<feature type="strand" evidence="13">
    <location>
        <begin position="243"/>
        <end position="246"/>
    </location>
</feature>
<reference key="1">
    <citation type="submission" date="1999-03" db="EMBL/GenBank/DDBJ databases">
        <title>cDNA cloning of a homolog for Saccharomyces cerevisiae ORC6 from Homo sapiens.</title>
        <authorList>
            <person name="Dean F.B."/>
            <person name="O'Donnell M."/>
        </authorList>
    </citation>
    <scope>NUCLEOTIDE SEQUENCE [MRNA]</scope>
</reference>
<reference key="2">
    <citation type="journal article" date="2004" name="Nat. Genet.">
        <title>Complete sequencing and characterization of 21,243 full-length human cDNAs.</title>
        <authorList>
            <person name="Ota T."/>
            <person name="Suzuki Y."/>
            <person name="Nishikawa T."/>
            <person name="Otsuki T."/>
            <person name="Sugiyama T."/>
            <person name="Irie R."/>
            <person name="Wakamatsu A."/>
            <person name="Hayashi K."/>
            <person name="Sato H."/>
            <person name="Nagai K."/>
            <person name="Kimura K."/>
            <person name="Makita H."/>
            <person name="Sekine M."/>
            <person name="Obayashi M."/>
            <person name="Nishi T."/>
            <person name="Shibahara T."/>
            <person name="Tanaka T."/>
            <person name="Ishii S."/>
            <person name="Yamamoto J."/>
            <person name="Saito K."/>
            <person name="Kawai Y."/>
            <person name="Isono Y."/>
            <person name="Nakamura Y."/>
            <person name="Nagahari K."/>
            <person name="Murakami K."/>
            <person name="Yasuda T."/>
            <person name="Iwayanagi T."/>
            <person name="Wagatsuma M."/>
            <person name="Shiratori A."/>
            <person name="Sudo H."/>
            <person name="Hosoiri T."/>
            <person name="Kaku Y."/>
            <person name="Kodaira H."/>
            <person name="Kondo H."/>
            <person name="Sugawara M."/>
            <person name="Takahashi M."/>
            <person name="Kanda K."/>
            <person name="Yokoi T."/>
            <person name="Furuya T."/>
            <person name="Kikkawa E."/>
            <person name="Omura Y."/>
            <person name="Abe K."/>
            <person name="Kamihara K."/>
            <person name="Katsuta N."/>
            <person name="Sato K."/>
            <person name="Tanikawa M."/>
            <person name="Yamazaki M."/>
            <person name="Ninomiya K."/>
            <person name="Ishibashi T."/>
            <person name="Yamashita H."/>
            <person name="Murakawa K."/>
            <person name="Fujimori K."/>
            <person name="Tanai H."/>
            <person name="Kimata M."/>
            <person name="Watanabe M."/>
            <person name="Hiraoka S."/>
            <person name="Chiba Y."/>
            <person name="Ishida S."/>
            <person name="Ono Y."/>
            <person name="Takiguchi S."/>
            <person name="Watanabe S."/>
            <person name="Yosida M."/>
            <person name="Hotuta T."/>
            <person name="Kusano J."/>
            <person name="Kanehori K."/>
            <person name="Takahashi-Fujii A."/>
            <person name="Hara H."/>
            <person name="Tanase T.-O."/>
            <person name="Nomura Y."/>
            <person name="Togiya S."/>
            <person name="Komai F."/>
            <person name="Hara R."/>
            <person name="Takeuchi K."/>
            <person name="Arita M."/>
            <person name="Imose N."/>
            <person name="Musashino K."/>
            <person name="Yuuki H."/>
            <person name="Oshima A."/>
            <person name="Sasaki N."/>
            <person name="Aotsuka S."/>
            <person name="Yoshikawa Y."/>
            <person name="Matsunawa H."/>
            <person name="Ichihara T."/>
            <person name="Shiohata N."/>
            <person name="Sano S."/>
            <person name="Moriya S."/>
            <person name="Momiyama H."/>
            <person name="Satoh N."/>
            <person name="Takami S."/>
            <person name="Terashima Y."/>
            <person name="Suzuki O."/>
            <person name="Nakagawa S."/>
            <person name="Senoh A."/>
            <person name="Mizoguchi H."/>
            <person name="Goto Y."/>
            <person name="Shimizu F."/>
            <person name="Wakebe H."/>
            <person name="Hishigaki H."/>
            <person name="Watanabe T."/>
            <person name="Sugiyama A."/>
            <person name="Takemoto M."/>
            <person name="Kawakami B."/>
            <person name="Yamazaki M."/>
            <person name="Watanabe K."/>
            <person name="Kumagai A."/>
            <person name="Itakura S."/>
            <person name="Fukuzumi Y."/>
            <person name="Fujimori Y."/>
            <person name="Komiyama M."/>
            <person name="Tashiro H."/>
            <person name="Tanigami A."/>
            <person name="Fujiwara T."/>
            <person name="Ono T."/>
            <person name="Yamada K."/>
            <person name="Fujii Y."/>
            <person name="Ozaki K."/>
            <person name="Hirao M."/>
            <person name="Ohmori Y."/>
            <person name="Kawabata A."/>
            <person name="Hikiji T."/>
            <person name="Kobatake N."/>
            <person name="Inagaki H."/>
            <person name="Ikema Y."/>
            <person name="Okamoto S."/>
            <person name="Okitani R."/>
            <person name="Kawakami T."/>
            <person name="Noguchi S."/>
            <person name="Itoh T."/>
            <person name="Shigeta K."/>
            <person name="Senba T."/>
            <person name="Matsumura K."/>
            <person name="Nakajima Y."/>
            <person name="Mizuno T."/>
            <person name="Morinaga M."/>
            <person name="Sasaki M."/>
            <person name="Togashi T."/>
            <person name="Oyama M."/>
            <person name="Hata H."/>
            <person name="Watanabe M."/>
            <person name="Komatsu T."/>
            <person name="Mizushima-Sugano J."/>
            <person name="Satoh T."/>
            <person name="Shirai Y."/>
            <person name="Takahashi Y."/>
            <person name="Nakagawa K."/>
            <person name="Okumura K."/>
            <person name="Nagase T."/>
            <person name="Nomura N."/>
            <person name="Kikuchi H."/>
            <person name="Masuho Y."/>
            <person name="Yamashita R."/>
            <person name="Nakai K."/>
            <person name="Yada T."/>
            <person name="Nakamura Y."/>
            <person name="Ohara O."/>
            <person name="Isogai T."/>
            <person name="Sugano S."/>
        </authorList>
    </citation>
    <scope>NUCLEOTIDE SEQUENCE [LARGE SCALE MRNA]</scope>
</reference>
<reference key="3">
    <citation type="submission" date="2005-07" db="EMBL/GenBank/DDBJ databases">
        <authorList>
            <person name="Mural R.J."/>
            <person name="Istrail S."/>
            <person name="Sutton G.G."/>
            <person name="Florea L."/>
            <person name="Halpern A.L."/>
            <person name="Mobarry C.M."/>
            <person name="Lippert R."/>
            <person name="Walenz B."/>
            <person name="Shatkay H."/>
            <person name="Dew I."/>
            <person name="Miller J.R."/>
            <person name="Flanigan M.J."/>
            <person name="Edwards N.J."/>
            <person name="Bolanos R."/>
            <person name="Fasulo D."/>
            <person name="Halldorsson B.V."/>
            <person name="Hannenhalli S."/>
            <person name="Turner R."/>
            <person name="Yooseph S."/>
            <person name="Lu F."/>
            <person name="Nusskern D.R."/>
            <person name="Shue B.C."/>
            <person name="Zheng X.H."/>
            <person name="Zhong F."/>
            <person name="Delcher A.L."/>
            <person name="Huson D.H."/>
            <person name="Kravitz S.A."/>
            <person name="Mouchard L."/>
            <person name="Reinert K."/>
            <person name="Remington K.A."/>
            <person name="Clark A.G."/>
            <person name="Waterman M.S."/>
            <person name="Eichler E.E."/>
            <person name="Adams M.D."/>
            <person name="Hunkapiller M.W."/>
            <person name="Myers E.W."/>
            <person name="Venter J.C."/>
        </authorList>
    </citation>
    <scope>NUCLEOTIDE SEQUENCE [LARGE SCALE GENOMIC DNA]</scope>
</reference>
<reference key="4">
    <citation type="journal article" date="2004" name="Genome Res.">
        <title>The status, quality, and expansion of the NIH full-length cDNA project: the Mammalian Gene Collection (MGC).</title>
        <authorList>
            <consortium name="The MGC Project Team"/>
        </authorList>
    </citation>
    <scope>NUCLEOTIDE SEQUENCE [LARGE SCALE MRNA]</scope>
    <source>
        <tissue>Cervix</tissue>
        <tissue>Testis</tissue>
    </source>
</reference>
<reference key="5">
    <citation type="journal article" date="2006" name="Cell">
        <title>Global, in vivo, and site-specific phosphorylation dynamics in signaling networks.</title>
        <authorList>
            <person name="Olsen J.V."/>
            <person name="Blagoev B."/>
            <person name="Gnad F."/>
            <person name="Macek B."/>
            <person name="Kumar C."/>
            <person name="Mortensen P."/>
            <person name="Mann M."/>
        </authorList>
    </citation>
    <scope>PHOSPHORYLATION [LARGE SCALE ANALYSIS] AT THR-195</scope>
    <scope>IDENTIFICATION BY MASS SPECTROMETRY [LARGE SCALE ANALYSIS]</scope>
    <source>
        <tissue>Cervix carcinoma</tissue>
    </source>
</reference>
<reference key="6">
    <citation type="journal article" date="2007" name="J. Biol. Chem.">
        <title>ATP-dependent assembly of the human origin recognition complex.</title>
        <authorList>
            <person name="Siddiqui K."/>
            <person name="Stillman B."/>
        </authorList>
    </citation>
    <scope>RECONSTITUTION OF THE ORC COMPLEX</scope>
    <scope>DISASSEMBLY OF THE ORC COMPLEX</scope>
</reference>
<reference key="7">
    <citation type="journal article" date="2007" name="Science">
        <title>ATM and ATR substrate analysis reveals extensive protein networks responsive to DNA damage.</title>
        <authorList>
            <person name="Matsuoka S."/>
            <person name="Ballif B.A."/>
            <person name="Smogorzewska A."/>
            <person name="McDonald E.R. III"/>
            <person name="Hurov K.E."/>
            <person name="Luo J."/>
            <person name="Bakalarski C.E."/>
            <person name="Zhao Z."/>
            <person name="Solimini N."/>
            <person name="Lerenthal Y."/>
            <person name="Shiloh Y."/>
            <person name="Gygi S.P."/>
            <person name="Elledge S.J."/>
        </authorList>
    </citation>
    <scope>PHOSPHORYLATION [LARGE SCALE ANALYSIS] AT THR-229</scope>
    <scope>IDENTIFICATION BY MASS SPECTROMETRY [LARGE SCALE ANALYSIS]</scope>
    <source>
        <tissue>Embryonic kidney</tissue>
    </source>
</reference>
<reference key="8">
    <citation type="journal article" date="2008" name="Proc. Natl. Acad. Sci. U.S.A.">
        <title>A quantitative atlas of mitotic phosphorylation.</title>
        <authorList>
            <person name="Dephoure N."/>
            <person name="Zhou C."/>
            <person name="Villen J."/>
            <person name="Beausoleil S.A."/>
            <person name="Bakalarski C.E."/>
            <person name="Elledge S.J."/>
            <person name="Gygi S.P."/>
        </authorList>
    </citation>
    <scope>IDENTIFICATION BY MASS SPECTROMETRY [LARGE SCALE ANALYSIS]</scope>
    <source>
        <tissue>Cervix carcinoma</tissue>
    </source>
</reference>
<reference key="9">
    <citation type="journal article" date="2010" name="Sci. Signal.">
        <title>Quantitative phosphoproteomics reveals widespread full phosphorylation site occupancy during mitosis.</title>
        <authorList>
            <person name="Olsen J.V."/>
            <person name="Vermeulen M."/>
            <person name="Santamaria A."/>
            <person name="Kumar C."/>
            <person name="Miller M.L."/>
            <person name="Jensen L.J."/>
            <person name="Gnad F."/>
            <person name="Cox J."/>
            <person name="Jensen T.S."/>
            <person name="Nigg E.A."/>
            <person name="Brunak S."/>
            <person name="Mann M."/>
        </authorList>
    </citation>
    <scope>PHOSPHORYLATION [LARGE SCALE ANALYSIS] AT THR-195</scope>
    <scope>IDENTIFICATION BY MASS SPECTROMETRY [LARGE SCALE ANALYSIS]</scope>
    <source>
        <tissue>Cervix carcinoma</tissue>
    </source>
</reference>
<reference key="10">
    <citation type="journal article" date="2012" name="J. Biol. Chem.">
        <title>Leucine-rich repeat and WD repeat-containing protein 1 is recruited to pericentric heterochromatin by trimethylated lysine 9 of histone H3 and maintains heterochromatin silencing.</title>
        <authorList>
            <person name="Chan K.M."/>
            <person name="Zhang Z."/>
        </authorList>
    </citation>
    <scope>LACK OF BINDING TO HISTONE H3 AND H4 TRIMETHYLATION MARKS</scope>
    <scope>FUNCTION</scope>
</reference>
<reference key="11">
    <citation type="journal article" date="2013" name="J. Proteome Res.">
        <title>Toward a comprehensive characterization of a human cancer cell phosphoproteome.</title>
        <authorList>
            <person name="Zhou H."/>
            <person name="Di Palma S."/>
            <person name="Preisinger C."/>
            <person name="Peng M."/>
            <person name="Polat A.N."/>
            <person name="Heck A.J."/>
            <person name="Mohammed S."/>
        </authorList>
    </citation>
    <scope>PHOSPHORYLATION [LARGE SCALE ANALYSIS] AT THR-195</scope>
    <scope>IDENTIFICATION BY MASS SPECTROMETRY [LARGE SCALE ANALYSIS]</scope>
    <source>
        <tissue>Cervix carcinoma</tissue>
        <tissue>Erythroleukemia</tissue>
    </source>
</reference>
<reference key="12">
    <citation type="journal article" date="2017" name="Nat. Struct. Mol. Biol.">
        <title>Site-specific mapping of the human SUMO proteome reveals co-modification with phosphorylation.</title>
        <authorList>
            <person name="Hendriks I.A."/>
            <person name="Lyon D."/>
            <person name="Young C."/>
            <person name="Jensen L.J."/>
            <person name="Vertegaal A.C."/>
            <person name="Nielsen M.L."/>
        </authorList>
    </citation>
    <scope>SUMOYLATION [LARGE SCALE ANALYSIS] AT LYS-210</scope>
    <scope>IDENTIFICATION BY MASS SPECTROMETRY [LARGE SCALE ANALYSIS]</scope>
</reference>
<reference key="13">
    <citation type="journal article" date="2011" name="Proc. Natl. Acad. Sci. U.S.A.">
        <title>Structural analysis of human Orc6 protein reveals a homology with transcription factor TFIIB.</title>
        <authorList>
            <person name="Liu S."/>
            <person name="Balasov M."/>
            <person name="Wang H."/>
            <person name="Wu L."/>
            <person name="Chesnokov I.N."/>
            <person name="Liu Y."/>
        </authorList>
    </citation>
    <scope>X-RAY CRYSTALLOGRAPHY (2.5 ANGSTROMS) OF 94-187</scope>
    <scope>MUTAGENESIS OF GLN-129; ARG-137 AND LYS-168</scope>
    <scope>DNA-BINDING</scope>
</reference>
<reference key="14">
    <citation type="journal article" date="2011" name="Nat. Genet.">
        <title>Mutations in the pre-replication complex cause Meier-Gorlin syndrome.</title>
        <authorList>
            <person name="Bicknell L.S."/>
            <person name="Bongers E.M."/>
            <person name="Leitch A."/>
            <person name="Brown S."/>
            <person name="Schoots J."/>
            <person name="Harley M.E."/>
            <person name="Aftimos S."/>
            <person name="Al-Aama J.Y."/>
            <person name="Bober M."/>
            <person name="Brown P.A."/>
            <person name="van Bokhoven H."/>
            <person name="Dean J."/>
            <person name="Edrees A.Y."/>
            <person name="Feingold M."/>
            <person name="Fryer A."/>
            <person name="Hoefsloot L.H."/>
            <person name="Kau N."/>
            <person name="Knoers N.V."/>
            <person name="Mackenzie J."/>
            <person name="Opitz J.M."/>
            <person name="Sarda P."/>
            <person name="Ross A."/>
            <person name="Temple I.K."/>
            <person name="Toutain A."/>
            <person name="Wise C.A."/>
            <person name="Wright M."/>
            <person name="Jackson A.P."/>
        </authorList>
    </citation>
    <scope>VARIANT MGORS3 SER-232</scope>
</reference>